<organism>
    <name type="scientific">Ehrlichia canis (strain Jake)</name>
    <dbReference type="NCBI Taxonomy" id="269484"/>
    <lineage>
        <taxon>Bacteria</taxon>
        <taxon>Pseudomonadati</taxon>
        <taxon>Pseudomonadota</taxon>
        <taxon>Alphaproteobacteria</taxon>
        <taxon>Rickettsiales</taxon>
        <taxon>Anaplasmataceae</taxon>
        <taxon>Ehrlichia</taxon>
    </lineage>
</organism>
<reference key="1">
    <citation type="journal article" date="2006" name="J. Bacteriol.">
        <title>The genome of the obligately intracellular bacterium Ehrlichia canis reveals themes of complex membrane structure and immune evasion strategies.</title>
        <authorList>
            <person name="Mavromatis K."/>
            <person name="Doyle C.K."/>
            <person name="Lykidis A."/>
            <person name="Ivanova N."/>
            <person name="Francino M.P."/>
            <person name="Chain P."/>
            <person name="Shin M."/>
            <person name="Malfatti S."/>
            <person name="Larimer F."/>
            <person name="Copeland A."/>
            <person name="Detter J.C."/>
            <person name="Land M."/>
            <person name="Richardson P.M."/>
            <person name="Yu X.J."/>
            <person name="Walker D.H."/>
            <person name="McBride J.W."/>
            <person name="Kyrpides N.C."/>
        </authorList>
    </citation>
    <scope>NUCLEOTIDE SEQUENCE [LARGE SCALE GENOMIC DNA]</scope>
    <source>
        <strain>Jake</strain>
    </source>
</reference>
<sequence>MLFNLIHNIHKEGYIFIMISFLASCIGFAISCSLGIVCLAMSLLCIFFFRDPIRVVPEGDNLITSPADGLILDIKEVNSPIDSSTQVVCISIFLNILNVHVNRIPVSGTIKSTEYIPGRFISASLDKSSELNERQRLIIESNLDKHLIILDQIAGLIARRIVCNAYQGQNVNLGEKFGIIRFGSRVNIYLPLSTHISVFKGQTVIAGETILAYLKEAPKQLTVKSI</sequence>
<name>PSD_EHRCJ</name>
<accession>Q3YSG2</accession>
<evidence type="ECO:0000255" key="1">
    <source>
        <dbReference type="HAMAP-Rule" id="MF_00664"/>
    </source>
</evidence>
<comment type="function">
    <text evidence="1">Catalyzes the formation of phosphatidylethanolamine (PtdEtn) from phosphatidylserine (PtdSer).</text>
</comment>
<comment type="catalytic activity">
    <reaction evidence="1">
        <text>a 1,2-diacyl-sn-glycero-3-phospho-L-serine + H(+) = a 1,2-diacyl-sn-glycero-3-phosphoethanolamine + CO2</text>
        <dbReference type="Rhea" id="RHEA:20828"/>
        <dbReference type="ChEBI" id="CHEBI:15378"/>
        <dbReference type="ChEBI" id="CHEBI:16526"/>
        <dbReference type="ChEBI" id="CHEBI:57262"/>
        <dbReference type="ChEBI" id="CHEBI:64612"/>
        <dbReference type="EC" id="4.1.1.65"/>
    </reaction>
</comment>
<comment type="cofactor">
    <cofactor evidence="1">
        <name>pyruvate</name>
        <dbReference type="ChEBI" id="CHEBI:15361"/>
    </cofactor>
    <text evidence="1">Binds 1 pyruvoyl group covalently per subunit.</text>
</comment>
<comment type="pathway">
    <text evidence="1">Phospholipid metabolism; phosphatidylethanolamine biosynthesis; phosphatidylethanolamine from CDP-diacylglycerol: step 2/2.</text>
</comment>
<comment type="subunit">
    <text evidence="1">Heterodimer of a large membrane-associated beta subunit and a small pyruvoyl-containing alpha subunit.</text>
</comment>
<comment type="subcellular location">
    <subcellularLocation>
        <location evidence="1">Cell membrane</location>
        <topology evidence="1">Peripheral membrane protein</topology>
    </subcellularLocation>
</comment>
<comment type="PTM">
    <text evidence="1">Is synthesized initially as an inactive proenzyme. Formation of the active enzyme involves a self-maturation process in which the active site pyruvoyl group is generated from an internal serine residue via an autocatalytic post-translational modification. Two non-identical subunits are generated from the proenzyme in this reaction, and the pyruvate is formed at the N-terminus of the alpha chain, which is derived from the carboxyl end of the proenzyme. The post-translation cleavage follows an unusual pathway, termed non-hydrolytic serinolysis, in which the side chain hydroxyl group of the serine supplies its oxygen atom to form the C-terminus of the beta chain, while the remainder of the serine residue undergoes an oxidative deamination to produce ammonia and the pyruvoyl prosthetic group on the alpha chain.</text>
</comment>
<comment type="similarity">
    <text evidence="1">Belongs to the phosphatidylserine decarboxylase family. PSD-A subfamily.</text>
</comment>
<protein>
    <recommendedName>
        <fullName evidence="1">Phosphatidylserine decarboxylase proenzyme</fullName>
        <ecNumber evidence="1">4.1.1.65</ecNumber>
    </recommendedName>
    <component>
        <recommendedName>
            <fullName evidence="1">Phosphatidylserine decarboxylase alpha chain</fullName>
        </recommendedName>
    </component>
    <component>
        <recommendedName>
            <fullName evidence="1">Phosphatidylserine decarboxylase beta chain</fullName>
        </recommendedName>
    </component>
</protein>
<gene>
    <name evidence="1" type="primary">psd</name>
    <name type="ordered locus">Ecaj_0296</name>
</gene>
<proteinExistence type="inferred from homology"/>
<feature type="chain" id="PRO_0000262209" description="Phosphatidylserine decarboxylase beta chain" evidence="1">
    <location>
        <begin position="1"/>
        <end position="183"/>
    </location>
</feature>
<feature type="chain" id="PRO_0000262210" description="Phosphatidylserine decarboxylase alpha chain" evidence="1">
    <location>
        <begin position="184"/>
        <end position="226"/>
    </location>
</feature>
<feature type="active site" description="Schiff-base intermediate with substrate; via pyruvic acid" evidence="1">
    <location>
        <position position="184"/>
    </location>
</feature>
<feature type="site" description="Cleavage (non-hydrolytic); by autocatalysis" evidence="1">
    <location>
        <begin position="183"/>
        <end position="184"/>
    </location>
</feature>
<feature type="modified residue" description="Pyruvic acid (Ser); by autocatalysis" evidence="1">
    <location>
        <position position="184"/>
    </location>
</feature>
<dbReference type="EC" id="4.1.1.65" evidence="1"/>
<dbReference type="EMBL" id="CP000107">
    <property type="protein sequence ID" value="AAZ68343.1"/>
    <property type="molecule type" value="Genomic_DNA"/>
</dbReference>
<dbReference type="RefSeq" id="WP_011304421.1">
    <property type="nucleotide sequence ID" value="NC_007354.1"/>
</dbReference>
<dbReference type="STRING" id="269484.Ecaj_0296"/>
<dbReference type="KEGG" id="ecn:Ecaj_0296"/>
<dbReference type="eggNOG" id="COG0688">
    <property type="taxonomic scope" value="Bacteria"/>
</dbReference>
<dbReference type="HOGENOM" id="CLU_072492_0_0_5"/>
<dbReference type="InParanoid" id="Q3YSG2"/>
<dbReference type="UniPathway" id="UPA00558">
    <property type="reaction ID" value="UER00616"/>
</dbReference>
<dbReference type="Proteomes" id="UP000000435">
    <property type="component" value="Chromosome"/>
</dbReference>
<dbReference type="GO" id="GO:0005886">
    <property type="term" value="C:plasma membrane"/>
    <property type="evidence" value="ECO:0007669"/>
    <property type="project" value="UniProtKB-SubCell"/>
</dbReference>
<dbReference type="GO" id="GO:0004609">
    <property type="term" value="F:phosphatidylserine decarboxylase activity"/>
    <property type="evidence" value="ECO:0007669"/>
    <property type="project" value="UniProtKB-UniRule"/>
</dbReference>
<dbReference type="GO" id="GO:0006646">
    <property type="term" value="P:phosphatidylethanolamine biosynthetic process"/>
    <property type="evidence" value="ECO:0007669"/>
    <property type="project" value="UniProtKB-UniRule"/>
</dbReference>
<dbReference type="HAMAP" id="MF_00664">
    <property type="entry name" value="PS_decarb_PSD_A"/>
    <property type="match status" value="1"/>
</dbReference>
<dbReference type="InterPro" id="IPR003817">
    <property type="entry name" value="PS_Dcarbxylase"/>
</dbReference>
<dbReference type="InterPro" id="IPR033175">
    <property type="entry name" value="PSD-A"/>
</dbReference>
<dbReference type="NCBIfam" id="NF003678">
    <property type="entry name" value="PRK05305.1-2"/>
    <property type="match status" value="1"/>
</dbReference>
<dbReference type="NCBIfam" id="NF003684">
    <property type="entry name" value="PRK05305.2-4"/>
    <property type="match status" value="1"/>
</dbReference>
<dbReference type="NCBIfam" id="NF003685">
    <property type="entry name" value="PRK05305.2-5"/>
    <property type="match status" value="1"/>
</dbReference>
<dbReference type="PANTHER" id="PTHR35809">
    <property type="entry name" value="ARCHAETIDYLSERINE DECARBOXYLASE PROENZYME-RELATED"/>
    <property type="match status" value="1"/>
</dbReference>
<dbReference type="PANTHER" id="PTHR35809:SF1">
    <property type="entry name" value="ARCHAETIDYLSERINE DECARBOXYLASE PROENZYME-RELATED"/>
    <property type="match status" value="1"/>
</dbReference>
<dbReference type="Pfam" id="PF02666">
    <property type="entry name" value="PS_Dcarbxylase"/>
    <property type="match status" value="1"/>
</dbReference>
<keyword id="KW-1003">Cell membrane</keyword>
<keyword id="KW-0210">Decarboxylase</keyword>
<keyword id="KW-0444">Lipid biosynthesis</keyword>
<keyword id="KW-0443">Lipid metabolism</keyword>
<keyword id="KW-0456">Lyase</keyword>
<keyword id="KW-0472">Membrane</keyword>
<keyword id="KW-0594">Phospholipid biosynthesis</keyword>
<keyword id="KW-1208">Phospholipid metabolism</keyword>
<keyword id="KW-0670">Pyruvate</keyword>
<keyword id="KW-0865">Zymogen</keyword>